<organism>
    <name type="scientific">Listeria monocytogenes serovar 1/2a (strain ATCC BAA-679 / EGD-e)</name>
    <dbReference type="NCBI Taxonomy" id="169963"/>
    <lineage>
        <taxon>Bacteria</taxon>
        <taxon>Bacillati</taxon>
        <taxon>Bacillota</taxon>
        <taxon>Bacilli</taxon>
        <taxon>Bacillales</taxon>
        <taxon>Listeriaceae</taxon>
        <taxon>Listeria</taxon>
    </lineage>
</organism>
<reference key="1">
    <citation type="journal article" date="2001" name="Science">
        <title>Comparative genomics of Listeria species.</title>
        <authorList>
            <person name="Glaser P."/>
            <person name="Frangeul L."/>
            <person name="Buchrieser C."/>
            <person name="Rusniok C."/>
            <person name="Amend A."/>
            <person name="Baquero F."/>
            <person name="Berche P."/>
            <person name="Bloecker H."/>
            <person name="Brandt P."/>
            <person name="Chakraborty T."/>
            <person name="Charbit A."/>
            <person name="Chetouani F."/>
            <person name="Couve E."/>
            <person name="de Daruvar A."/>
            <person name="Dehoux P."/>
            <person name="Domann E."/>
            <person name="Dominguez-Bernal G."/>
            <person name="Duchaud E."/>
            <person name="Durant L."/>
            <person name="Dussurget O."/>
            <person name="Entian K.-D."/>
            <person name="Fsihi H."/>
            <person name="Garcia-del Portillo F."/>
            <person name="Garrido P."/>
            <person name="Gautier L."/>
            <person name="Goebel W."/>
            <person name="Gomez-Lopez N."/>
            <person name="Hain T."/>
            <person name="Hauf J."/>
            <person name="Jackson D."/>
            <person name="Jones L.-M."/>
            <person name="Kaerst U."/>
            <person name="Kreft J."/>
            <person name="Kuhn M."/>
            <person name="Kunst F."/>
            <person name="Kurapkat G."/>
            <person name="Madueno E."/>
            <person name="Maitournam A."/>
            <person name="Mata Vicente J."/>
            <person name="Ng E."/>
            <person name="Nedjari H."/>
            <person name="Nordsiek G."/>
            <person name="Novella S."/>
            <person name="de Pablos B."/>
            <person name="Perez-Diaz J.-C."/>
            <person name="Purcell R."/>
            <person name="Remmel B."/>
            <person name="Rose M."/>
            <person name="Schlueter T."/>
            <person name="Simoes N."/>
            <person name="Tierrez A."/>
            <person name="Vazquez-Boland J.-A."/>
            <person name="Voss H."/>
            <person name="Wehland J."/>
            <person name="Cossart P."/>
        </authorList>
    </citation>
    <scope>NUCLEOTIDE SEQUENCE [LARGE SCALE GENOMIC DNA]</scope>
    <source>
        <strain>ATCC BAA-679 / EGD-e</strain>
    </source>
</reference>
<comment type="function">
    <text evidence="1">Proton-dependent transporter. May mediate the efflux of lincomycin (By similarity).</text>
</comment>
<comment type="subcellular location">
    <subcellularLocation>
        <location evidence="3">Cell membrane</location>
        <topology evidence="3">Multi-pass membrane protein</topology>
    </subcellularLocation>
</comment>
<comment type="similarity">
    <text evidence="3">Belongs to the major facilitator superfamily. EmrB family.</text>
</comment>
<keyword id="KW-0046">Antibiotic resistance</keyword>
<keyword id="KW-1003">Cell membrane</keyword>
<keyword id="KW-0472">Membrane</keyword>
<keyword id="KW-1185">Reference proteome</keyword>
<keyword id="KW-0812">Transmembrane</keyword>
<keyword id="KW-1133">Transmembrane helix</keyword>
<keyword id="KW-0813">Transport</keyword>
<dbReference type="EMBL" id="AL591975">
    <property type="protein sequence ID" value="CAC98598.1"/>
    <property type="molecule type" value="Genomic_DNA"/>
</dbReference>
<dbReference type="PIR" id="AH1139">
    <property type="entry name" value="AH1139"/>
</dbReference>
<dbReference type="RefSeq" id="NP_464047.1">
    <property type="nucleotide sequence ID" value="NC_003210.1"/>
</dbReference>
<dbReference type="RefSeq" id="WP_009931218.1">
    <property type="nucleotide sequence ID" value="NZ_CP149495.1"/>
</dbReference>
<dbReference type="SMR" id="Q8Y9K8"/>
<dbReference type="STRING" id="169963.gene:17593170"/>
<dbReference type="PaxDb" id="169963-lmo0519"/>
<dbReference type="EnsemblBacteria" id="CAC98598">
    <property type="protein sequence ID" value="CAC98598"/>
    <property type="gene ID" value="CAC98598"/>
</dbReference>
<dbReference type="GeneID" id="985272"/>
<dbReference type="KEGG" id="lmo:lmo0519"/>
<dbReference type="PATRIC" id="fig|169963.11.peg.538"/>
<dbReference type="eggNOG" id="COG0477">
    <property type="taxonomic scope" value="Bacteria"/>
</dbReference>
<dbReference type="HOGENOM" id="CLU_000960_28_0_9"/>
<dbReference type="OrthoDB" id="9816041at2"/>
<dbReference type="PhylomeDB" id="Q8Y9K8"/>
<dbReference type="BioCyc" id="LMON169963:LMO0519-MONOMER"/>
<dbReference type="Proteomes" id="UP000000817">
    <property type="component" value="Chromosome"/>
</dbReference>
<dbReference type="GO" id="GO:0016020">
    <property type="term" value="C:membrane"/>
    <property type="evidence" value="ECO:0000318"/>
    <property type="project" value="GO_Central"/>
</dbReference>
<dbReference type="GO" id="GO:0005886">
    <property type="term" value="C:plasma membrane"/>
    <property type="evidence" value="ECO:0007669"/>
    <property type="project" value="UniProtKB-SubCell"/>
</dbReference>
<dbReference type="GO" id="GO:0022857">
    <property type="term" value="F:transmembrane transporter activity"/>
    <property type="evidence" value="ECO:0007669"/>
    <property type="project" value="InterPro"/>
</dbReference>
<dbReference type="GO" id="GO:0046677">
    <property type="term" value="P:response to antibiotic"/>
    <property type="evidence" value="ECO:0007669"/>
    <property type="project" value="UniProtKB-KW"/>
</dbReference>
<dbReference type="CDD" id="cd17503">
    <property type="entry name" value="MFS_LmrB_MDR_like"/>
    <property type="match status" value="1"/>
</dbReference>
<dbReference type="Gene3D" id="1.20.1250.20">
    <property type="entry name" value="MFS general substrate transporter like domains"/>
    <property type="match status" value="1"/>
</dbReference>
<dbReference type="Gene3D" id="1.20.1720.10">
    <property type="entry name" value="Multidrug resistance protein D"/>
    <property type="match status" value="1"/>
</dbReference>
<dbReference type="InterPro" id="IPR004638">
    <property type="entry name" value="EmrB-like"/>
</dbReference>
<dbReference type="InterPro" id="IPR011701">
    <property type="entry name" value="MFS"/>
</dbReference>
<dbReference type="InterPro" id="IPR020846">
    <property type="entry name" value="MFS_dom"/>
</dbReference>
<dbReference type="InterPro" id="IPR036259">
    <property type="entry name" value="MFS_trans_sf"/>
</dbReference>
<dbReference type="NCBIfam" id="TIGR00711">
    <property type="entry name" value="efflux_EmrB"/>
    <property type="match status" value="1"/>
</dbReference>
<dbReference type="PANTHER" id="PTHR42718:SF43">
    <property type="entry name" value="LINCOMYCIN RESISTANCE PROTEIN LMRB"/>
    <property type="match status" value="1"/>
</dbReference>
<dbReference type="PANTHER" id="PTHR42718">
    <property type="entry name" value="MAJOR FACILITATOR SUPERFAMILY MULTIDRUG TRANSPORTER MFSC"/>
    <property type="match status" value="1"/>
</dbReference>
<dbReference type="Pfam" id="PF07690">
    <property type="entry name" value="MFS_1"/>
    <property type="match status" value="1"/>
</dbReference>
<dbReference type="PRINTS" id="PR01036">
    <property type="entry name" value="TCRTETB"/>
</dbReference>
<dbReference type="SUPFAM" id="SSF103473">
    <property type="entry name" value="MFS general substrate transporter"/>
    <property type="match status" value="1"/>
</dbReference>
<dbReference type="PROSITE" id="PS50850">
    <property type="entry name" value="MFS"/>
    <property type="match status" value="1"/>
</dbReference>
<sequence>MQQEATGGQKIRPIPIIASFLMAGFIGLFSETALNMALSDLIQVFDISSATVQWLTTGYLLTLGILVPISGLLLQWFTTRGLFFTAVSFSIAGTLIAALSPTFAMLMIGRVVQAVGTALLLPLMFNTILLIFPEHKRGSAMGMIGLVIMFAPAVGPTISGLILENLTWNWIFWISLPFLIIALLFGMKFMQNVSVVTKPKIDILSIILSTLGFGGVVFAFSSAGESGWGSATVLVSIIVGGIALGLFVWRQLTMEKPLMDLKVFKYPMFTLGLILVFISFMMILSTMILLPLYLQNSLALAAFSAGLVLLPGGVLNGLMSPFTGRLFDAYGPRALVIPGFIVAVVALFFLTRIEVGTSALTIIVLHSVLMIGISMVMMPAQTNGLNQLPPKLYPDGTAIMNTLQQVSGAIGTAVAITIMSAGQKAYMETAQGVGPEQMVASLTAGIQNAFVFGLIMACIGLLCSLFIRKAK</sequence>
<gene>
    <name type="primary">lmrB</name>
    <name type="ordered locus">lmo0519</name>
</gene>
<feature type="chain" id="PRO_0000173330" description="Lincomycin resistance protein LmrB">
    <location>
        <begin position="1"/>
        <end position="471"/>
    </location>
</feature>
<feature type="transmembrane region" description="Helical" evidence="2">
    <location>
        <begin position="13"/>
        <end position="35"/>
    </location>
</feature>
<feature type="transmembrane region" description="Helical" evidence="2">
    <location>
        <begin position="55"/>
        <end position="77"/>
    </location>
</feature>
<feature type="transmembrane region" description="Helical" evidence="2">
    <location>
        <begin position="84"/>
        <end position="106"/>
    </location>
</feature>
<feature type="transmembrane region" description="Helical" evidence="2">
    <location>
        <begin position="111"/>
        <end position="133"/>
    </location>
</feature>
<feature type="transmembrane region" description="Helical" evidence="2">
    <location>
        <begin position="140"/>
        <end position="162"/>
    </location>
</feature>
<feature type="transmembrane region" description="Helical" evidence="2">
    <location>
        <begin position="167"/>
        <end position="189"/>
    </location>
</feature>
<feature type="transmembrane region" description="Helical" evidence="2">
    <location>
        <begin position="201"/>
        <end position="223"/>
    </location>
</feature>
<feature type="transmembrane region" description="Helical" evidence="2">
    <location>
        <begin position="227"/>
        <end position="249"/>
    </location>
</feature>
<feature type="transmembrane region" description="Helical" evidence="2">
    <location>
        <begin position="269"/>
        <end position="291"/>
    </location>
</feature>
<feature type="transmembrane region" description="Helical" evidence="2">
    <location>
        <begin position="329"/>
        <end position="351"/>
    </location>
</feature>
<feature type="transmembrane region" description="Helical" evidence="2">
    <location>
        <begin position="358"/>
        <end position="380"/>
    </location>
</feature>
<feature type="transmembrane region" description="Helical" evidence="2">
    <location>
        <begin position="445"/>
        <end position="467"/>
    </location>
</feature>
<protein>
    <recommendedName>
        <fullName>Lincomycin resistance protein LmrB</fullName>
    </recommendedName>
</protein>
<proteinExistence type="inferred from homology"/>
<name>LMRB_LISMO</name>
<accession>Q8Y9K8</accession>
<evidence type="ECO:0000250" key="1"/>
<evidence type="ECO:0000255" key="2"/>
<evidence type="ECO:0000305" key="3"/>